<organism>
    <name type="scientific">Canine adenovirus serotype 1 (strain CLL)</name>
    <name type="common">CAdV-1</name>
    <name type="synonym">Canine adenovirus 1 (strain CLL)</name>
    <dbReference type="NCBI Taxonomy" id="69150"/>
    <lineage>
        <taxon>Viruses</taxon>
        <taxon>Varidnaviria</taxon>
        <taxon>Bamfordvirae</taxon>
        <taxon>Preplasmiviricota</taxon>
        <taxon>Tectiliviricetes</taxon>
        <taxon>Rowavirales</taxon>
        <taxon>Adenoviridae</taxon>
        <taxon>Mastadenovirus</taxon>
        <taxon>Canine mastadenovirus A</taxon>
    </lineage>
</organism>
<gene>
    <name evidence="1" type="primary">L2</name>
</gene>
<reference key="1">
    <citation type="submission" date="1996-08" db="EMBL/GenBank/DDBJ databases">
        <title>DNA sequence and genomic organization of canine adenovirus type 1.</title>
        <authorList>
            <person name="Campbell J.B."/>
            <person name="Zhao Y."/>
        </authorList>
    </citation>
    <scope>NUCLEOTIDE SEQUENCE [LARGE SCALE GENOMIC DNA]</scope>
</reference>
<dbReference type="EMBL" id="U55001">
    <property type="protein sequence ID" value="AAB05440.1"/>
    <property type="molecule type" value="Genomic_DNA"/>
</dbReference>
<dbReference type="GO" id="GO:0044196">
    <property type="term" value="C:host cell nucleolus"/>
    <property type="evidence" value="ECO:0007669"/>
    <property type="project" value="UniProtKB-SubCell"/>
</dbReference>
<dbReference type="GO" id="GO:0044423">
    <property type="term" value="C:virion component"/>
    <property type="evidence" value="ECO:0007669"/>
    <property type="project" value="UniProtKB-UniRule"/>
</dbReference>
<dbReference type="GO" id="GO:0003677">
    <property type="term" value="F:DNA binding"/>
    <property type="evidence" value="ECO:0007669"/>
    <property type="project" value="UniProtKB-UniRule"/>
</dbReference>
<dbReference type="GO" id="GO:0019076">
    <property type="term" value="P:viral release from host cell"/>
    <property type="evidence" value="ECO:0007669"/>
    <property type="project" value="UniProtKB-UniRule"/>
</dbReference>
<dbReference type="HAMAP" id="MF_04053">
    <property type="entry name" value="ADV_CORE5"/>
    <property type="match status" value="1"/>
</dbReference>
<dbReference type="InterPro" id="IPR005608">
    <property type="entry name" value="Adeno_V"/>
</dbReference>
<dbReference type="Pfam" id="PF03910">
    <property type="entry name" value="Adeno_PV"/>
    <property type="match status" value="2"/>
</dbReference>
<comment type="function">
    <text evidence="1">Associates loosely with the viral DNA to form an outer shell around the nucleoprotein-DNA complex and links it with the capsid by binding the endosome lysis protein. Dissociates from the viral genome during entry. Might be involved in nuclear capsid assembly of the viral particles through its association with NPM1/nucleophosmin.</text>
</comment>
<comment type="subunit">
    <text evidence="1">Monomer. Homodimer. Exists in equilibrium between monomers and dimers in solution. Interacts with the histone-like nucleoprotein; this interactions bridge the virus core to the capsid. Interacts with core protein X; this interactions bridge the virus core to the capsid. Interacts with the endosome lysis protein VI; this interactions bridge the virus core to the capsid. Interacts with the peripentonal hexons. Interacts with host NPM1; this interaction might play a role in virus assembly.</text>
</comment>
<comment type="subcellular location">
    <subcellularLocation>
        <location evidence="1">Virion</location>
    </subcellularLocation>
    <subcellularLocation>
        <location evidence="1">Host nucleus</location>
        <location evidence="1">Host nucleolus</location>
    </subcellularLocation>
    <text evidence="1">Located inside the capsid (core). Present in 157 copies per virion. Localizes in the nucleoli during infection, then translocates from the nucleoli to the nucleoplasm as the infection progresses and is finally incorporated into the viral particles.</text>
</comment>
<comment type="induction">
    <text evidence="1">Expressed in the late phase of the viral replicative cycle.</text>
</comment>
<comment type="miscellaneous">
    <text evidence="1">All late proteins expressed from the major late promoter are produced by alternative splicing and alternative polyadenylation of the same gene giving rise to non-overlapping ORFs. A leader sequence is present in the N-terminus of all these mRNAs and is recognized by the viral shutoff protein to provide expression although conventional translation via ribosome scanning from the cap has been shut off in the host cell.</text>
</comment>
<comment type="miscellaneous">
    <text evidence="1">This protein is only encoded by mastadenoviruses, and may therefore play a role in mammals tropism.</text>
</comment>
<comment type="similarity">
    <text evidence="1 2">Belongs to the adenoviridae core-capsid bridging protein family.</text>
</comment>
<keyword id="KW-0238">DNA-binding</keyword>
<keyword id="KW-1048">Host nucleus</keyword>
<keyword id="KW-0426">Late protein</keyword>
<keyword id="KW-0118">Viral capsid assembly</keyword>
<keyword id="KW-1188">Viral release from host cell</keyword>
<keyword id="KW-0946">Virion</keyword>
<name>CORE5_ADECC</name>
<accession>Q65952</accession>
<proteinExistence type="inferred from homology"/>
<evidence type="ECO:0000255" key="1">
    <source>
        <dbReference type="HAMAP-Rule" id="MF_04053"/>
    </source>
</evidence>
<evidence type="ECO:0000305" key="2"/>
<organismHost>
    <name type="scientific">Canis lupus familiaris</name>
    <name type="common">Dog</name>
    <name type="synonym">Canis familiaris</name>
    <dbReference type="NCBI Taxonomy" id="9615"/>
</organismHost>
<protein>
    <recommendedName>
        <fullName evidence="1">Core-capsid bridging protein</fullName>
    </recommendedName>
    <alternativeName>
        <fullName evidence="1">Core protein V</fullName>
    </alternativeName>
</protein>
<feature type="chain" id="PRO_0000221908" description="Core-capsid bridging protein">
    <location>
        <begin position="1"/>
        <end position="421"/>
    </location>
</feature>
<sequence length="421" mass="47538">MAAISRAIKQELLEDLKPEMYLPPKSTRRRAKVKTEEKVDVKTLVKSKSKKRRAAKNELEENVEFVRRFAPRRPYQWRGRQVRALPRPGIPVVFTPGQRSGVASKRSYDEVYADEDVLDQSGNMINEFAYGKRVKMLTHKNPTPSQVPITPQEPIARPGEAGLLPTVQVLAPRDSKHETMLPVTKSEGGDVKVENKGFEQITPQLGVQTVDIKVPVKRKSEVEDEILKRAKMEPFETTVKMEYSEQPQVEVFDTGVEPSSFFEVRSQARPIAVARKRRVPTVEVMEVQQSDHTAPTASAAPVANVIVGPHLSRRPSRWGPANAIYPDYVYHPSISAKKTMGPRPTGRVSRWGPANSIFPEVRLHPSMVSAVTRAAPRKSTKSRRRRRVRTRRAFVLPAGTKTGVMLPQNIRYHPSILFRRA</sequence>